<comment type="function">
    <text evidence="1">DNA-dependent RNA polymerase catalyzes the transcription of DNA into RNA using the four ribonucleoside triphosphates as substrates.</text>
</comment>
<comment type="catalytic activity">
    <reaction evidence="1">
        <text>RNA(n) + a ribonucleoside 5'-triphosphate = RNA(n+1) + diphosphate</text>
        <dbReference type="Rhea" id="RHEA:21248"/>
        <dbReference type="Rhea" id="RHEA-COMP:14527"/>
        <dbReference type="Rhea" id="RHEA-COMP:17342"/>
        <dbReference type="ChEBI" id="CHEBI:33019"/>
        <dbReference type="ChEBI" id="CHEBI:61557"/>
        <dbReference type="ChEBI" id="CHEBI:140395"/>
        <dbReference type="EC" id="2.7.7.6"/>
    </reaction>
</comment>
<comment type="cofactor">
    <cofactor evidence="1">
        <name>Mg(2+)</name>
        <dbReference type="ChEBI" id="CHEBI:18420"/>
    </cofactor>
    <text evidence="1">Binds 1 Mg(2+) ion per subunit.</text>
</comment>
<comment type="cofactor">
    <cofactor evidence="1">
        <name>Zn(2+)</name>
        <dbReference type="ChEBI" id="CHEBI:29105"/>
    </cofactor>
    <text evidence="1">Binds 2 Zn(2+) ions per subunit.</text>
</comment>
<comment type="subunit">
    <text evidence="1">The RNAP catalytic core consists of 2 alpha, 1 beta, 1 beta' and 1 omega subunit. When a sigma factor is associated with the core the holoenzyme is formed, which can initiate transcription.</text>
</comment>
<comment type="similarity">
    <text evidence="1">Belongs to the RNA polymerase beta' chain family.</text>
</comment>
<feature type="chain" id="PRO_0000240797" description="DNA-directed RNA polymerase subunit beta'">
    <location>
        <begin position="1"/>
        <end position="1413"/>
    </location>
</feature>
<feature type="binding site" evidence="1">
    <location>
        <position position="70"/>
    </location>
    <ligand>
        <name>Zn(2+)</name>
        <dbReference type="ChEBI" id="CHEBI:29105"/>
        <label>1</label>
    </ligand>
</feature>
<feature type="binding site" evidence="1">
    <location>
        <position position="72"/>
    </location>
    <ligand>
        <name>Zn(2+)</name>
        <dbReference type="ChEBI" id="CHEBI:29105"/>
        <label>1</label>
    </ligand>
</feature>
<feature type="binding site" evidence="1">
    <location>
        <position position="85"/>
    </location>
    <ligand>
        <name>Zn(2+)</name>
        <dbReference type="ChEBI" id="CHEBI:29105"/>
        <label>1</label>
    </ligand>
</feature>
<feature type="binding site" evidence="1">
    <location>
        <position position="88"/>
    </location>
    <ligand>
        <name>Zn(2+)</name>
        <dbReference type="ChEBI" id="CHEBI:29105"/>
        <label>1</label>
    </ligand>
</feature>
<feature type="binding site" evidence="1">
    <location>
        <position position="460"/>
    </location>
    <ligand>
        <name>Mg(2+)</name>
        <dbReference type="ChEBI" id="CHEBI:18420"/>
    </ligand>
</feature>
<feature type="binding site" evidence="1">
    <location>
        <position position="462"/>
    </location>
    <ligand>
        <name>Mg(2+)</name>
        <dbReference type="ChEBI" id="CHEBI:18420"/>
    </ligand>
</feature>
<feature type="binding site" evidence="1">
    <location>
        <position position="464"/>
    </location>
    <ligand>
        <name>Mg(2+)</name>
        <dbReference type="ChEBI" id="CHEBI:18420"/>
    </ligand>
</feature>
<feature type="binding site" evidence="1">
    <location>
        <position position="814"/>
    </location>
    <ligand>
        <name>Zn(2+)</name>
        <dbReference type="ChEBI" id="CHEBI:29105"/>
        <label>2</label>
    </ligand>
</feature>
<feature type="binding site" evidence="1">
    <location>
        <position position="888"/>
    </location>
    <ligand>
        <name>Zn(2+)</name>
        <dbReference type="ChEBI" id="CHEBI:29105"/>
        <label>2</label>
    </ligand>
</feature>
<feature type="binding site" evidence="1">
    <location>
        <position position="895"/>
    </location>
    <ligand>
        <name>Zn(2+)</name>
        <dbReference type="ChEBI" id="CHEBI:29105"/>
        <label>2</label>
    </ligand>
</feature>
<feature type="binding site" evidence="1">
    <location>
        <position position="898"/>
    </location>
    <ligand>
        <name>Zn(2+)</name>
        <dbReference type="ChEBI" id="CHEBI:29105"/>
        <label>2</label>
    </ligand>
</feature>
<gene>
    <name evidence="1" type="primary">rpoC</name>
    <name type="ordered locus">BAV0014</name>
</gene>
<evidence type="ECO:0000255" key="1">
    <source>
        <dbReference type="HAMAP-Rule" id="MF_01322"/>
    </source>
</evidence>
<reference key="1">
    <citation type="journal article" date="2006" name="J. Bacteriol.">
        <title>Comparison of the genome sequence of the poultry pathogen Bordetella avium with those of B. bronchiseptica, B. pertussis, and B. parapertussis reveals extensive diversity in surface structures associated with host interaction.</title>
        <authorList>
            <person name="Sebaihia M."/>
            <person name="Preston A."/>
            <person name="Maskell D.J."/>
            <person name="Kuzmiak H."/>
            <person name="Connell T.D."/>
            <person name="King N.D."/>
            <person name="Orndorff P.E."/>
            <person name="Miyamoto D.M."/>
            <person name="Thomson N.R."/>
            <person name="Harris D."/>
            <person name="Goble A."/>
            <person name="Lord A."/>
            <person name="Murphy L."/>
            <person name="Quail M.A."/>
            <person name="Rutter S."/>
            <person name="Squares R."/>
            <person name="Squares S."/>
            <person name="Woodward J."/>
            <person name="Parkhill J."/>
            <person name="Temple L.M."/>
        </authorList>
    </citation>
    <scope>NUCLEOTIDE SEQUENCE [LARGE SCALE GENOMIC DNA]</scope>
    <source>
        <strain>197N</strain>
    </source>
</reference>
<keyword id="KW-0240">DNA-directed RNA polymerase</keyword>
<keyword id="KW-0460">Magnesium</keyword>
<keyword id="KW-0479">Metal-binding</keyword>
<keyword id="KW-0548">Nucleotidyltransferase</keyword>
<keyword id="KW-1185">Reference proteome</keyword>
<keyword id="KW-0804">Transcription</keyword>
<keyword id="KW-0808">Transferase</keyword>
<keyword id="KW-0862">Zinc</keyword>
<proteinExistence type="inferred from homology"/>
<dbReference type="EC" id="2.7.7.6" evidence="1"/>
<dbReference type="EMBL" id="AM167904">
    <property type="protein sequence ID" value="CAJ47598.1"/>
    <property type="molecule type" value="Genomic_DNA"/>
</dbReference>
<dbReference type="RefSeq" id="WP_012415725.1">
    <property type="nucleotide sequence ID" value="NC_010645.1"/>
</dbReference>
<dbReference type="SMR" id="Q2L2L3"/>
<dbReference type="STRING" id="360910.BAV0014"/>
<dbReference type="GeneID" id="92936741"/>
<dbReference type="KEGG" id="bav:BAV0014"/>
<dbReference type="eggNOG" id="COG0086">
    <property type="taxonomic scope" value="Bacteria"/>
</dbReference>
<dbReference type="HOGENOM" id="CLU_000524_3_1_4"/>
<dbReference type="OrthoDB" id="9815296at2"/>
<dbReference type="Proteomes" id="UP000001977">
    <property type="component" value="Chromosome"/>
</dbReference>
<dbReference type="GO" id="GO:0000428">
    <property type="term" value="C:DNA-directed RNA polymerase complex"/>
    <property type="evidence" value="ECO:0007669"/>
    <property type="project" value="UniProtKB-KW"/>
</dbReference>
<dbReference type="GO" id="GO:0003677">
    <property type="term" value="F:DNA binding"/>
    <property type="evidence" value="ECO:0007669"/>
    <property type="project" value="UniProtKB-UniRule"/>
</dbReference>
<dbReference type="GO" id="GO:0003899">
    <property type="term" value="F:DNA-directed RNA polymerase activity"/>
    <property type="evidence" value="ECO:0007669"/>
    <property type="project" value="UniProtKB-UniRule"/>
</dbReference>
<dbReference type="GO" id="GO:0000287">
    <property type="term" value="F:magnesium ion binding"/>
    <property type="evidence" value="ECO:0007669"/>
    <property type="project" value="UniProtKB-UniRule"/>
</dbReference>
<dbReference type="GO" id="GO:0008270">
    <property type="term" value="F:zinc ion binding"/>
    <property type="evidence" value="ECO:0007669"/>
    <property type="project" value="UniProtKB-UniRule"/>
</dbReference>
<dbReference type="GO" id="GO:0006351">
    <property type="term" value="P:DNA-templated transcription"/>
    <property type="evidence" value="ECO:0007669"/>
    <property type="project" value="UniProtKB-UniRule"/>
</dbReference>
<dbReference type="CDD" id="cd02655">
    <property type="entry name" value="RNAP_beta'_C"/>
    <property type="match status" value="1"/>
</dbReference>
<dbReference type="CDD" id="cd01609">
    <property type="entry name" value="RNAP_beta'_N"/>
    <property type="match status" value="1"/>
</dbReference>
<dbReference type="FunFam" id="1.10.132.30:FF:000003">
    <property type="entry name" value="DNA-directed RNA polymerase subunit beta"/>
    <property type="match status" value="1"/>
</dbReference>
<dbReference type="FunFam" id="1.10.150.390:FF:000002">
    <property type="entry name" value="DNA-directed RNA polymerase subunit beta"/>
    <property type="match status" value="1"/>
</dbReference>
<dbReference type="FunFam" id="4.10.860.120:FF:000001">
    <property type="entry name" value="DNA-directed RNA polymerase subunit beta"/>
    <property type="match status" value="1"/>
</dbReference>
<dbReference type="Gene3D" id="1.10.132.30">
    <property type="match status" value="1"/>
</dbReference>
<dbReference type="Gene3D" id="1.10.150.390">
    <property type="match status" value="1"/>
</dbReference>
<dbReference type="Gene3D" id="1.10.1790.20">
    <property type="match status" value="1"/>
</dbReference>
<dbReference type="Gene3D" id="1.10.40.90">
    <property type="match status" value="1"/>
</dbReference>
<dbReference type="Gene3D" id="2.40.40.20">
    <property type="match status" value="1"/>
</dbReference>
<dbReference type="Gene3D" id="2.40.50.100">
    <property type="match status" value="3"/>
</dbReference>
<dbReference type="Gene3D" id="4.10.860.120">
    <property type="entry name" value="RNA polymerase II, clamp domain"/>
    <property type="match status" value="1"/>
</dbReference>
<dbReference type="Gene3D" id="1.10.274.100">
    <property type="entry name" value="RNA polymerase Rpb1, domain 3"/>
    <property type="match status" value="1"/>
</dbReference>
<dbReference type="HAMAP" id="MF_01322">
    <property type="entry name" value="RNApol_bact_RpoC"/>
    <property type="match status" value="1"/>
</dbReference>
<dbReference type="InterPro" id="IPR045867">
    <property type="entry name" value="DNA-dir_RpoC_beta_prime"/>
</dbReference>
<dbReference type="InterPro" id="IPR012754">
    <property type="entry name" value="DNA-dir_RpoC_beta_prime_bact"/>
</dbReference>
<dbReference type="InterPro" id="IPR000722">
    <property type="entry name" value="RNA_pol_asu"/>
</dbReference>
<dbReference type="InterPro" id="IPR006592">
    <property type="entry name" value="RNA_pol_N"/>
</dbReference>
<dbReference type="InterPro" id="IPR007080">
    <property type="entry name" value="RNA_pol_Rpb1_1"/>
</dbReference>
<dbReference type="InterPro" id="IPR007066">
    <property type="entry name" value="RNA_pol_Rpb1_3"/>
</dbReference>
<dbReference type="InterPro" id="IPR042102">
    <property type="entry name" value="RNA_pol_Rpb1_3_sf"/>
</dbReference>
<dbReference type="InterPro" id="IPR007083">
    <property type="entry name" value="RNA_pol_Rpb1_4"/>
</dbReference>
<dbReference type="InterPro" id="IPR007081">
    <property type="entry name" value="RNA_pol_Rpb1_5"/>
</dbReference>
<dbReference type="InterPro" id="IPR044893">
    <property type="entry name" value="RNA_pol_Rpb1_clamp_domain"/>
</dbReference>
<dbReference type="InterPro" id="IPR038120">
    <property type="entry name" value="Rpb1_funnel_sf"/>
</dbReference>
<dbReference type="NCBIfam" id="TIGR02386">
    <property type="entry name" value="rpoC_TIGR"/>
    <property type="match status" value="1"/>
</dbReference>
<dbReference type="PANTHER" id="PTHR19376">
    <property type="entry name" value="DNA-DIRECTED RNA POLYMERASE"/>
    <property type="match status" value="1"/>
</dbReference>
<dbReference type="PANTHER" id="PTHR19376:SF54">
    <property type="entry name" value="DNA-DIRECTED RNA POLYMERASE SUBUNIT BETA"/>
    <property type="match status" value="1"/>
</dbReference>
<dbReference type="Pfam" id="PF04997">
    <property type="entry name" value="RNA_pol_Rpb1_1"/>
    <property type="match status" value="1"/>
</dbReference>
<dbReference type="Pfam" id="PF00623">
    <property type="entry name" value="RNA_pol_Rpb1_2"/>
    <property type="match status" value="2"/>
</dbReference>
<dbReference type="Pfam" id="PF04983">
    <property type="entry name" value="RNA_pol_Rpb1_3"/>
    <property type="match status" value="1"/>
</dbReference>
<dbReference type="Pfam" id="PF05000">
    <property type="entry name" value="RNA_pol_Rpb1_4"/>
    <property type="match status" value="1"/>
</dbReference>
<dbReference type="Pfam" id="PF04998">
    <property type="entry name" value="RNA_pol_Rpb1_5"/>
    <property type="match status" value="1"/>
</dbReference>
<dbReference type="SMART" id="SM00663">
    <property type="entry name" value="RPOLA_N"/>
    <property type="match status" value="1"/>
</dbReference>
<dbReference type="SUPFAM" id="SSF64484">
    <property type="entry name" value="beta and beta-prime subunits of DNA dependent RNA-polymerase"/>
    <property type="match status" value="1"/>
</dbReference>
<protein>
    <recommendedName>
        <fullName evidence="1">DNA-directed RNA polymerase subunit beta'</fullName>
        <shortName evidence="1">RNAP subunit beta'</shortName>
        <ecNumber evidence="1">2.7.7.6</ecNumber>
    </recommendedName>
    <alternativeName>
        <fullName evidence="1">RNA polymerase subunit beta'</fullName>
    </alternativeName>
    <alternativeName>
        <fullName evidence="1">Transcriptase subunit beta'</fullName>
    </alternativeName>
</protein>
<accession>Q2L2L3</accession>
<sequence>MKALLDLFKQVSQDEQFDAIKIGLASPEKIRSWSYGEVRKPETINYRTFKPERDGLFCAKIFGPIKDYECLCGKYKRLKHRGVICEKCGVEVTVAKVRRERMGHIELASPVAHIWFLKSLPSRLGMVLDMTLRDIERVLYFEAWCVIEPGMTPLKRGQIMSDDDFLAKTEEYGDDFRALMGAEAVRELLRTIDIDREVETLRGELKATSSEAKIKKISKRLKVLEGFQKSGIKPDWMVMEVLPVLPPDLRPLVPLDGGRFATSDLNDLYRRVINRNNRLKRLLELKAPEIILRNEKRMLQEAVDSLLDNGRRGKAMTGANKRQLKSLADMIKGKSGRFRQNLLGKRVDYSGRSVIVVGPQLKLHQCGLPKLMALELFKPFIFNRLEMMGLATTIKAAKKLVESQEPVVWDILEEVIREHPVMLNRAPTLHRLGIQAFEPVLIEGKAIQLHPLVCAAFNADFDGDQMAVHVPLSLEAQLEARTLMLASNNVLFPANGEPSIVPSQDIVLGLYYTTRERINGRGEGIFFADVAEVQRAYDNGEVELQTRITVRLKEHERDEQGEWQPVIRRHETTVGRALLSEILPRGLPFTVLNKALKKKEISRLINQSFRRCGLRDTVIFADKLMQSGFRLATRGGISIAMEDMLIPAAKEVILAEAGREVKEIDKQYSSGLVTSQERYNNVVDIWGKAGDKVGKAMMEQLATEPVVNRHGENVRQESFNSIYMMADSGARGSAAQIRQLAGMRGLMAKPDGSIIETPITANFREGLNVLQYFISTHGARKGLADTALKTANSGYLTRRLVDVTQDLVITEVDCGTSHGYSMKALVEGGEVIEPLRDRILGRVAAVDIVNPDTQETEITAGTLLDEDLVDLIDRVGVDEVKVRTPLTCETRHGLCAHCYGRDLGRGSHVNVGEAVGVIAAQSIGEPGTQLTMRTFHIGGAASRSALASAVETKSNGTVGFASTMRYVTNAKGERVAISRSGELAIYDDNGRERERHKIPYGATVLVGDGDAVKAGTRLATWDPLTRPIVSEYGGAVRFENIEEGVTVAKQVDEVTGLSTLVVITPKTRGGKVVMRPQIKLVNDNGEDVRIAGTDHAVNISFPVGALITVRDGQQVAVGEVLARIPQESQKTRDITGGLPRVAELFEARSPKDAGMLAEVTGTVSFGKDTKGKQRLVITDLEGISHEFLIPKEKQVLVHDGQVVNKGEMIVDGPADPHDILRLQGIEKLATYIVDEVQDVYRLQGVKINDKHIEVIVRQMLRRVNITDPGDADFIPGEQVERSELLNENDRVIAEDKRPAQYDNVLLGITKASLSTDSFISAASFQETTRVLTEAAIMGKRDDLRGLKENVIVGRLIPAGTGLAYHLARKDKEALEAAEREAARQQANPFEEMPVAADIEVDVSLPFEGETPAE</sequence>
<name>RPOC_BORA1</name>
<organism>
    <name type="scientific">Bordetella avium (strain 197N)</name>
    <dbReference type="NCBI Taxonomy" id="360910"/>
    <lineage>
        <taxon>Bacteria</taxon>
        <taxon>Pseudomonadati</taxon>
        <taxon>Pseudomonadota</taxon>
        <taxon>Betaproteobacteria</taxon>
        <taxon>Burkholderiales</taxon>
        <taxon>Alcaligenaceae</taxon>
        <taxon>Bordetella</taxon>
    </lineage>
</organism>